<comment type="function">
    <text evidence="1">Part of the binding-protein-dependent transport system for D-methionine. Probably responsible for the translocation of the substrate across the membrane (By similarity).</text>
</comment>
<comment type="subcellular location">
    <subcellularLocation>
        <location evidence="1">Cell inner membrane</location>
        <topology evidence="2">Multi-pass membrane protein</topology>
    </subcellularLocation>
</comment>
<comment type="similarity">
    <text evidence="3">Belongs to the binding-protein-dependent transport system permease family. CysTW subfamily.</text>
</comment>
<comment type="sequence caution" evidence="3">
    <conflict type="erroneous initiation">
        <sequence resource="EMBL-CDS" id="AAK03813"/>
    </conflict>
</comment>
<feature type="chain" id="PRO_0000060104" description="Probable D-methionine transport system permease protein MetI">
    <location>
        <begin position="1"/>
        <end position="217"/>
    </location>
</feature>
<feature type="transmembrane region" description="Helical" evidence="2">
    <location>
        <begin position="20"/>
        <end position="40"/>
    </location>
</feature>
<feature type="transmembrane region" description="Helical" evidence="2">
    <location>
        <begin position="58"/>
        <end position="78"/>
    </location>
</feature>
<feature type="transmembrane region" description="Helical" evidence="2">
    <location>
        <begin position="81"/>
        <end position="101"/>
    </location>
</feature>
<feature type="transmembrane region" description="Helical" evidence="2">
    <location>
        <begin position="143"/>
        <end position="163"/>
    </location>
</feature>
<feature type="transmembrane region" description="Helical" evidence="2">
    <location>
        <begin position="184"/>
        <end position="204"/>
    </location>
</feature>
<feature type="domain" description="ABC transmembrane type-1" evidence="2">
    <location>
        <begin position="13"/>
        <end position="207"/>
    </location>
</feature>
<protein>
    <recommendedName>
        <fullName>Probable D-methionine transport system permease protein MetI</fullName>
    </recommendedName>
</protein>
<evidence type="ECO:0000250" key="1"/>
<evidence type="ECO:0000255" key="2">
    <source>
        <dbReference type="PROSITE-ProRule" id="PRU00441"/>
    </source>
</evidence>
<evidence type="ECO:0000305" key="3"/>
<accession>Q9CK96</accession>
<name>METI_PASMU</name>
<dbReference type="EMBL" id="AE004439">
    <property type="protein sequence ID" value="AAK03813.1"/>
    <property type="status" value="ALT_INIT"/>
    <property type="molecule type" value="Genomic_DNA"/>
</dbReference>
<dbReference type="SMR" id="Q9CK96"/>
<dbReference type="STRING" id="272843.PM1729"/>
<dbReference type="EnsemblBacteria" id="AAK03813">
    <property type="protein sequence ID" value="AAK03813"/>
    <property type="gene ID" value="PM1729"/>
</dbReference>
<dbReference type="KEGG" id="pmu:PM1729"/>
<dbReference type="HOGENOM" id="CLU_077375_0_1_6"/>
<dbReference type="Proteomes" id="UP000000809">
    <property type="component" value="Chromosome"/>
</dbReference>
<dbReference type="GO" id="GO:0005886">
    <property type="term" value="C:plasma membrane"/>
    <property type="evidence" value="ECO:0007669"/>
    <property type="project" value="UniProtKB-SubCell"/>
</dbReference>
<dbReference type="GO" id="GO:0048473">
    <property type="term" value="P:D-methionine transmembrane transport"/>
    <property type="evidence" value="ECO:0007669"/>
    <property type="project" value="TreeGrafter"/>
</dbReference>
<dbReference type="CDD" id="cd06261">
    <property type="entry name" value="TM_PBP2"/>
    <property type="match status" value="1"/>
</dbReference>
<dbReference type="FunFam" id="1.10.3720.10:FF:000002">
    <property type="entry name" value="D-methionine ABC transporter permease MetI"/>
    <property type="match status" value="1"/>
</dbReference>
<dbReference type="Gene3D" id="1.10.3720.10">
    <property type="entry name" value="MetI-like"/>
    <property type="match status" value="1"/>
</dbReference>
<dbReference type="InterPro" id="IPR051322">
    <property type="entry name" value="AA_ABC_Transporter_Permease"/>
</dbReference>
<dbReference type="InterPro" id="IPR000515">
    <property type="entry name" value="MetI-like"/>
</dbReference>
<dbReference type="InterPro" id="IPR035906">
    <property type="entry name" value="MetI-like_sf"/>
</dbReference>
<dbReference type="NCBIfam" id="NF008049">
    <property type="entry name" value="PRK10782.1"/>
    <property type="match status" value="1"/>
</dbReference>
<dbReference type="PANTHER" id="PTHR30450">
    <property type="entry name" value="ABC TRANSPORTER PERMEASE"/>
    <property type="match status" value="1"/>
</dbReference>
<dbReference type="PANTHER" id="PTHR30450:SF1">
    <property type="entry name" value="D-METHIONINE TRANSPORT SYSTEM PERMEASE PROTEIN METI-RELATED"/>
    <property type="match status" value="1"/>
</dbReference>
<dbReference type="Pfam" id="PF00528">
    <property type="entry name" value="BPD_transp_1"/>
    <property type="match status" value="1"/>
</dbReference>
<dbReference type="SUPFAM" id="SSF161098">
    <property type="entry name" value="MetI-like"/>
    <property type="match status" value="1"/>
</dbReference>
<dbReference type="PROSITE" id="PS50928">
    <property type="entry name" value="ABC_TM1"/>
    <property type="match status" value="1"/>
</dbReference>
<keyword id="KW-0029">Amino-acid transport</keyword>
<keyword id="KW-0997">Cell inner membrane</keyword>
<keyword id="KW-1003">Cell membrane</keyword>
<keyword id="KW-0472">Membrane</keyword>
<keyword id="KW-1185">Reference proteome</keyword>
<keyword id="KW-0812">Transmembrane</keyword>
<keyword id="KW-1133">Transmembrane helix</keyword>
<keyword id="KW-0813">Transport</keyword>
<sequence length="217" mass="23382">MTPRIWELVGLSTLETLYMGFIATLFAIVIGLPIGLLAFLTGKGEILENRRANQVLNVIINIGRSVPFIILLIILLPFTRLVVGTTLGTTAAIVPLSVSAIPFFARLTANALLEIPSGLTEAAKSMGATNWQIVTKYYLPESIPILINGITLTLVALIGYSAMAGAVGGGGLGNLAITYGEHRNMIYVKWIATIIIVLIVMLSQKLGDHLAERFDHR</sequence>
<gene>
    <name type="primary">metI</name>
    <name type="ordered locus">PM1729</name>
</gene>
<reference key="1">
    <citation type="journal article" date="2001" name="Proc. Natl. Acad. Sci. U.S.A.">
        <title>Complete genomic sequence of Pasteurella multocida Pm70.</title>
        <authorList>
            <person name="May B.J."/>
            <person name="Zhang Q."/>
            <person name="Li L.L."/>
            <person name="Paustian M.L."/>
            <person name="Whittam T.S."/>
            <person name="Kapur V."/>
        </authorList>
    </citation>
    <scope>NUCLEOTIDE SEQUENCE [LARGE SCALE GENOMIC DNA]</scope>
    <source>
        <strain>Pm70</strain>
    </source>
</reference>
<organism>
    <name type="scientific">Pasteurella multocida (strain Pm70)</name>
    <dbReference type="NCBI Taxonomy" id="272843"/>
    <lineage>
        <taxon>Bacteria</taxon>
        <taxon>Pseudomonadati</taxon>
        <taxon>Pseudomonadota</taxon>
        <taxon>Gammaproteobacteria</taxon>
        <taxon>Pasteurellales</taxon>
        <taxon>Pasteurellaceae</taxon>
        <taxon>Pasteurella</taxon>
    </lineage>
</organism>
<proteinExistence type="inferred from homology"/>